<accession>Q756L0</accession>
<keyword id="KW-0010">Activator</keyword>
<keyword id="KW-0156">Chromatin regulator</keyword>
<keyword id="KW-0227">DNA damage</keyword>
<keyword id="KW-0234">DNA repair</keyword>
<keyword id="KW-0539">Nucleus</keyword>
<keyword id="KW-1185">Reference proteome</keyword>
<keyword id="KW-0804">Transcription</keyword>
<keyword id="KW-0805">Transcription regulation</keyword>
<reference key="1">
    <citation type="journal article" date="2004" name="Science">
        <title>The Ashbya gossypii genome as a tool for mapping the ancient Saccharomyces cerevisiae genome.</title>
        <authorList>
            <person name="Dietrich F.S."/>
            <person name="Voegeli S."/>
            <person name="Brachat S."/>
            <person name="Lerch A."/>
            <person name="Gates K."/>
            <person name="Steiner S."/>
            <person name="Mohr C."/>
            <person name="Poehlmann R."/>
            <person name="Luedi P."/>
            <person name="Choi S."/>
            <person name="Wing R.A."/>
            <person name="Flavier A."/>
            <person name="Gaffney T.D."/>
            <person name="Philippsen P."/>
        </authorList>
    </citation>
    <scope>NUCLEOTIDE SEQUENCE [LARGE SCALE GENOMIC DNA]</scope>
    <source>
        <strain>ATCC 10895 / CBS 109.51 / FGSC 9923 / NRRL Y-1056</strain>
    </source>
</reference>
<reference key="2">
    <citation type="journal article" date="2013" name="G3 (Bethesda)">
        <title>Genomes of Ashbya fungi isolated from insects reveal four mating-type loci, numerous translocations, lack of transposons, and distinct gene duplications.</title>
        <authorList>
            <person name="Dietrich F.S."/>
            <person name="Voegeli S."/>
            <person name="Kuo S."/>
            <person name="Philippsen P."/>
        </authorList>
    </citation>
    <scope>GENOME REANNOTATION</scope>
    <scope>SEQUENCE REVISION TO 38</scope>
    <source>
        <strain>ATCC 10895 / CBS 109.51 / FGSC 9923 / NRRL Y-1056</strain>
    </source>
</reference>
<comment type="function">
    <text evidence="1">Component of the NuA4 histone acetyltransferase complex which is involved in transcriptional activation of selected genes principally by acetylation of nucleosomal histone H4 and H2A. The NuA4 complex is also involved in DNA repair (By similarity).</text>
</comment>
<comment type="subunit">
    <text evidence="1">Component of the NuA4 histone acetyltransferase complex.</text>
</comment>
<comment type="subcellular location">
    <subcellularLocation>
        <location evidence="5">Nucleus</location>
    </subcellularLocation>
</comment>
<comment type="similarity">
    <text evidence="5">Belongs to the EAF1 family.</text>
</comment>
<feature type="chain" id="PRO_0000065813" description="Chromatin modification-related protein EAF1">
    <location>
        <begin position="1"/>
        <end position="957"/>
    </location>
</feature>
<feature type="domain" description="HSA" evidence="3">
    <location>
        <begin position="334"/>
        <end position="409"/>
    </location>
</feature>
<feature type="domain" description="Myb-like" evidence="2">
    <location>
        <begin position="576"/>
        <end position="638"/>
    </location>
</feature>
<feature type="region of interest" description="Disordered" evidence="4">
    <location>
        <begin position="72"/>
        <end position="115"/>
    </location>
</feature>
<feature type="region of interest" description="Disordered" evidence="4">
    <location>
        <begin position="160"/>
        <end position="196"/>
    </location>
</feature>
<feature type="region of interest" description="Disordered" evidence="4">
    <location>
        <begin position="703"/>
        <end position="804"/>
    </location>
</feature>
<feature type="region of interest" description="Disordered" evidence="4">
    <location>
        <begin position="922"/>
        <end position="957"/>
    </location>
</feature>
<feature type="compositionally biased region" description="Polar residues" evidence="4">
    <location>
        <begin position="89"/>
        <end position="100"/>
    </location>
</feature>
<feature type="compositionally biased region" description="Basic and acidic residues" evidence="4">
    <location>
        <begin position="102"/>
        <end position="115"/>
    </location>
</feature>
<feature type="compositionally biased region" description="Polar residues" evidence="4">
    <location>
        <begin position="184"/>
        <end position="196"/>
    </location>
</feature>
<feature type="compositionally biased region" description="Basic and acidic residues" evidence="4">
    <location>
        <begin position="734"/>
        <end position="750"/>
    </location>
</feature>
<feature type="compositionally biased region" description="Low complexity" evidence="4">
    <location>
        <begin position="762"/>
        <end position="792"/>
    </location>
</feature>
<organism>
    <name type="scientific">Eremothecium gossypii (strain ATCC 10895 / CBS 109.51 / FGSC 9923 / NRRL Y-1056)</name>
    <name type="common">Yeast</name>
    <name type="synonym">Ashbya gossypii</name>
    <dbReference type="NCBI Taxonomy" id="284811"/>
    <lineage>
        <taxon>Eukaryota</taxon>
        <taxon>Fungi</taxon>
        <taxon>Dikarya</taxon>
        <taxon>Ascomycota</taxon>
        <taxon>Saccharomycotina</taxon>
        <taxon>Saccharomycetes</taxon>
        <taxon>Saccharomycetales</taxon>
        <taxon>Saccharomycetaceae</taxon>
        <taxon>Eremothecium</taxon>
    </lineage>
</organism>
<sequence length="957" mass="109651">MSVLKKDSTSEKRTQLESILEERNNKLTQLFWLSRLNELKSGGDLQSVRQELAEFLVQNDLTKNLTFDISSLRTYRPQEPPMDRRPLRSKSSTPLENGTINRKREDAEPHMEETRKRLREHIIPEEDDDREHEQRPVKLQKVGLSHDEELPKRLEPPTIPIRKISSAGDNQETGSVIGEKKSEQPVSTSRNRPIHTQLSTNPFYQHMDISTLRAEPTPVEVKRKRNYIIDEIIKTQSKSTDTSDSHSTAGGRDSVYLVMKETVPSKLARAIPLSELKYVSQTLPLIRLIPPTHKALTTDLYNTALNEGRITVVSSRIEELRRLNLWSLRQPKKFLDPWRQKQPSTHRGYMLEEARWMREDFHEFKKFKVSVCAVNSKAIMDYWKYGKACCIKRRSISHLQKSVNEVQEADTLGNIDDLLNKISDKKLAGMIEEQKKVIAVDAKLSSSKIAPSEEIHAPHIWEDPLDELDEQGCKPIFKTYMSYNGVSPLEKTILEDLPIYKGILDEQAAEDNSVPFVPISKSTVLLDDDYFMKLIEKDIVDDEPSFVALSKRRGMFYGNRRSHYLKPPSAPALRYLKFRTPTIWSPEDDQELVKNINQYAYNWDLIGALVSSSNGRSYISNIERRTPWQCFERFVQLNEKFSVHDMKGPRANAAQMWLYEAHKLQQQQKRRISPLGVGSESIQRGHRRLRWATMFEAMRKTIKKRENAPRPNPSQPRKPLDVKSAAVPTPAEMSELKAQRDETLRREGQMRRAAKQRIHLAQLQQQQQRVQQDVVQQRPQSRSQPDPPLSQQIPRVQSPRPQQPLAQQLIEDKGKLLPGVSVSAPTSKEASNNGKNLMALRQVQSSPVNGDLQKATAQVPPRGPNKPLTEKEIIESYARKIIAQKPDFTPELALKAAESYYQNVTLKQNTIGKQIVSQPLSAATVSTPPSNGRAVHKIRSPTPQEILQRIQQKKNDS</sequence>
<proteinExistence type="inferred from homology"/>
<name>EAF1_EREGS</name>
<evidence type="ECO:0000250" key="1"/>
<evidence type="ECO:0000255" key="2">
    <source>
        <dbReference type="PROSITE-ProRule" id="PRU00133"/>
    </source>
</evidence>
<evidence type="ECO:0000255" key="3">
    <source>
        <dbReference type="PROSITE-ProRule" id="PRU00549"/>
    </source>
</evidence>
<evidence type="ECO:0000256" key="4">
    <source>
        <dbReference type="SAM" id="MobiDB-lite"/>
    </source>
</evidence>
<evidence type="ECO:0000305" key="5"/>
<gene>
    <name type="primary">EAF1</name>
    <name type="synonym">VID21</name>
    <name type="ordered locus">AER244C</name>
</gene>
<protein>
    <recommendedName>
        <fullName>Chromatin modification-related protein EAF1</fullName>
    </recommendedName>
    <alternativeName>
        <fullName>ESA1-associated factor 1</fullName>
    </alternativeName>
    <alternativeName>
        <fullName>Vacuolar import and degradation protein 21</fullName>
    </alternativeName>
</protein>
<dbReference type="EMBL" id="AE016818">
    <property type="protein sequence ID" value="AAS52925.2"/>
    <property type="molecule type" value="Genomic_DNA"/>
</dbReference>
<dbReference type="RefSeq" id="NP_985101.2">
    <property type="nucleotide sequence ID" value="NM_210455.2"/>
</dbReference>
<dbReference type="SMR" id="Q756L0"/>
<dbReference type="FunCoup" id="Q756L0">
    <property type="interactions" value="310"/>
</dbReference>
<dbReference type="STRING" id="284811.Q756L0"/>
<dbReference type="EnsemblFungi" id="AAS52925">
    <property type="protein sequence ID" value="AAS52925"/>
    <property type="gene ID" value="AGOS_AER244C"/>
</dbReference>
<dbReference type="GeneID" id="4621311"/>
<dbReference type="KEGG" id="ago:AGOS_AER244C"/>
<dbReference type="eggNOG" id="ENOG502QSEY">
    <property type="taxonomic scope" value="Eukaryota"/>
</dbReference>
<dbReference type="HOGENOM" id="CLU_004795_0_0_1"/>
<dbReference type="InParanoid" id="Q756L0"/>
<dbReference type="OMA" id="KPLDCKN"/>
<dbReference type="OrthoDB" id="5364245at2759"/>
<dbReference type="Proteomes" id="UP000000591">
    <property type="component" value="Chromosome V"/>
</dbReference>
<dbReference type="GO" id="GO:0035267">
    <property type="term" value="C:NuA4 histone acetyltransferase complex"/>
    <property type="evidence" value="ECO:0000318"/>
    <property type="project" value="GO_Central"/>
</dbReference>
<dbReference type="GO" id="GO:0005634">
    <property type="term" value="C:nucleus"/>
    <property type="evidence" value="ECO:0007669"/>
    <property type="project" value="UniProtKB-SubCell"/>
</dbReference>
<dbReference type="GO" id="GO:0003682">
    <property type="term" value="F:chromatin binding"/>
    <property type="evidence" value="ECO:0000318"/>
    <property type="project" value="GO_Central"/>
</dbReference>
<dbReference type="GO" id="GO:0006325">
    <property type="term" value="P:chromatin organization"/>
    <property type="evidence" value="ECO:0007669"/>
    <property type="project" value="UniProtKB-KW"/>
</dbReference>
<dbReference type="GO" id="GO:0006281">
    <property type="term" value="P:DNA repair"/>
    <property type="evidence" value="ECO:0000318"/>
    <property type="project" value="GO_Central"/>
</dbReference>
<dbReference type="GO" id="GO:0065003">
    <property type="term" value="P:protein-containing complex assembly"/>
    <property type="evidence" value="ECO:0007669"/>
    <property type="project" value="EnsemblFungi"/>
</dbReference>
<dbReference type="CDD" id="cd00167">
    <property type="entry name" value="SANT"/>
    <property type="match status" value="1"/>
</dbReference>
<dbReference type="Gene3D" id="1.10.10.60">
    <property type="entry name" value="Homeodomain-like"/>
    <property type="match status" value="1"/>
</dbReference>
<dbReference type="InterPro" id="IPR009057">
    <property type="entry name" value="Homeodomain-like_sf"/>
</dbReference>
<dbReference type="InterPro" id="IPR014012">
    <property type="entry name" value="HSA_dom"/>
</dbReference>
<dbReference type="InterPro" id="IPR001005">
    <property type="entry name" value="SANT/Myb"/>
</dbReference>
<dbReference type="PANTHER" id="PTHR46459:SF1">
    <property type="entry name" value="E1A-BINDING PROTEIN P400"/>
    <property type="match status" value="1"/>
</dbReference>
<dbReference type="PANTHER" id="PTHR46459">
    <property type="entry name" value="E1A-BINDING PROTEIN P400-RELATED"/>
    <property type="match status" value="1"/>
</dbReference>
<dbReference type="Pfam" id="PF07529">
    <property type="entry name" value="HSA"/>
    <property type="match status" value="1"/>
</dbReference>
<dbReference type="Pfam" id="PF13921">
    <property type="entry name" value="Myb_DNA-bind_6"/>
    <property type="match status" value="1"/>
</dbReference>
<dbReference type="SMART" id="SM00573">
    <property type="entry name" value="HSA"/>
    <property type="match status" value="1"/>
</dbReference>
<dbReference type="SMART" id="SM00717">
    <property type="entry name" value="SANT"/>
    <property type="match status" value="1"/>
</dbReference>
<dbReference type="SUPFAM" id="SSF46689">
    <property type="entry name" value="Homeodomain-like"/>
    <property type="match status" value="1"/>
</dbReference>
<dbReference type="PROSITE" id="PS51204">
    <property type="entry name" value="HSA"/>
    <property type="match status" value="1"/>
</dbReference>
<dbReference type="PROSITE" id="PS50090">
    <property type="entry name" value="MYB_LIKE"/>
    <property type="match status" value="1"/>
</dbReference>